<name>ATPD_ACIC1</name>
<comment type="function">
    <text evidence="1">F(1)F(0) ATP synthase produces ATP from ADP in the presence of a proton or sodium gradient. F-type ATPases consist of two structural domains, F(1) containing the extramembraneous catalytic core and F(0) containing the membrane proton channel, linked together by a central stalk and a peripheral stalk. During catalysis, ATP synthesis in the catalytic domain of F(1) is coupled via a rotary mechanism of the central stalk subunits to proton translocation.</text>
</comment>
<comment type="function">
    <text evidence="1">This protein is part of the stalk that links CF(0) to CF(1). It either transmits conformational changes from CF(0) to CF(1) or is implicated in proton conduction.</text>
</comment>
<comment type="subunit">
    <text evidence="1">F-type ATPases have 2 components, F(1) - the catalytic core - and F(0) - the membrane proton channel. F(1) has five subunits: alpha(3), beta(3), gamma(1), delta(1), epsilon(1). F(0) has three main subunits: a(1), b(2) and c(10-14). The alpha and beta chains form an alternating ring which encloses part of the gamma chain. F(1) is attached to F(0) by a central stalk formed by the gamma and epsilon chains, while a peripheral stalk is formed by the delta and b chains.</text>
</comment>
<comment type="subcellular location">
    <subcellularLocation>
        <location evidence="1">Cell membrane</location>
        <topology evidence="1">Peripheral membrane protein</topology>
    </subcellularLocation>
</comment>
<comment type="similarity">
    <text evidence="1">Belongs to the ATPase delta chain family.</text>
</comment>
<gene>
    <name evidence="1" type="primary">atpH</name>
    <name type="ordered locus">Acel_0650</name>
</gene>
<protein>
    <recommendedName>
        <fullName evidence="1">ATP synthase subunit delta</fullName>
    </recommendedName>
    <alternativeName>
        <fullName evidence="1">ATP synthase F(1) sector subunit delta</fullName>
    </alternativeName>
    <alternativeName>
        <fullName evidence="1">F-type ATPase subunit delta</fullName>
        <shortName evidence="1">F-ATPase subunit delta</shortName>
    </alternativeName>
</protein>
<accession>A0LSL3</accession>
<feature type="chain" id="PRO_0000370866" description="ATP synthase subunit delta">
    <location>
        <begin position="1"/>
        <end position="274"/>
    </location>
</feature>
<organism>
    <name type="scientific">Acidothermus cellulolyticus (strain ATCC 43068 / DSM 8971 / 11B)</name>
    <dbReference type="NCBI Taxonomy" id="351607"/>
    <lineage>
        <taxon>Bacteria</taxon>
        <taxon>Bacillati</taxon>
        <taxon>Actinomycetota</taxon>
        <taxon>Actinomycetes</taxon>
        <taxon>Acidothermales</taxon>
        <taxon>Acidothermaceae</taxon>
        <taxon>Acidothermus</taxon>
    </lineage>
</organism>
<proteinExistence type="inferred from homology"/>
<dbReference type="EMBL" id="CP000481">
    <property type="protein sequence ID" value="ABK52423.1"/>
    <property type="molecule type" value="Genomic_DNA"/>
</dbReference>
<dbReference type="RefSeq" id="WP_011719486.1">
    <property type="nucleotide sequence ID" value="NC_008578.1"/>
</dbReference>
<dbReference type="SMR" id="A0LSL3"/>
<dbReference type="FunCoup" id="A0LSL3">
    <property type="interactions" value="36"/>
</dbReference>
<dbReference type="STRING" id="351607.Acel_0650"/>
<dbReference type="KEGG" id="ace:Acel_0650"/>
<dbReference type="eggNOG" id="COG0712">
    <property type="taxonomic scope" value="Bacteria"/>
</dbReference>
<dbReference type="HOGENOM" id="CLU_088880_0_0_11"/>
<dbReference type="InParanoid" id="A0LSL3"/>
<dbReference type="OrthoDB" id="5242917at2"/>
<dbReference type="Proteomes" id="UP000008221">
    <property type="component" value="Chromosome"/>
</dbReference>
<dbReference type="GO" id="GO:0005886">
    <property type="term" value="C:plasma membrane"/>
    <property type="evidence" value="ECO:0007669"/>
    <property type="project" value="UniProtKB-SubCell"/>
</dbReference>
<dbReference type="GO" id="GO:0045259">
    <property type="term" value="C:proton-transporting ATP synthase complex"/>
    <property type="evidence" value="ECO:0007669"/>
    <property type="project" value="UniProtKB-KW"/>
</dbReference>
<dbReference type="GO" id="GO:0046933">
    <property type="term" value="F:proton-transporting ATP synthase activity, rotational mechanism"/>
    <property type="evidence" value="ECO:0007669"/>
    <property type="project" value="UniProtKB-UniRule"/>
</dbReference>
<dbReference type="Gene3D" id="1.10.520.20">
    <property type="entry name" value="N-terminal domain of the delta subunit of the F1F0-ATP synthase"/>
    <property type="match status" value="1"/>
</dbReference>
<dbReference type="HAMAP" id="MF_01416">
    <property type="entry name" value="ATP_synth_delta_bact"/>
    <property type="match status" value="1"/>
</dbReference>
<dbReference type="InterPro" id="IPR026015">
    <property type="entry name" value="ATP_synth_OSCP/delta_N_sf"/>
</dbReference>
<dbReference type="InterPro" id="IPR020781">
    <property type="entry name" value="ATPase_OSCP/d_CS"/>
</dbReference>
<dbReference type="InterPro" id="IPR000711">
    <property type="entry name" value="ATPase_OSCP/dsu"/>
</dbReference>
<dbReference type="NCBIfam" id="TIGR01145">
    <property type="entry name" value="ATP_synt_delta"/>
    <property type="match status" value="1"/>
</dbReference>
<dbReference type="NCBIfam" id="NF009967">
    <property type="entry name" value="PRK13430.1"/>
    <property type="match status" value="1"/>
</dbReference>
<dbReference type="PANTHER" id="PTHR11910">
    <property type="entry name" value="ATP SYNTHASE DELTA CHAIN"/>
    <property type="match status" value="1"/>
</dbReference>
<dbReference type="Pfam" id="PF00213">
    <property type="entry name" value="OSCP"/>
    <property type="match status" value="1"/>
</dbReference>
<dbReference type="PROSITE" id="PS00389">
    <property type="entry name" value="ATPASE_DELTA"/>
    <property type="match status" value="1"/>
</dbReference>
<evidence type="ECO:0000255" key="1">
    <source>
        <dbReference type="HAMAP-Rule" id="MF_01416"/>
    </source>
</evidence>
<reference key="1">
    <citation type="journal article" date="2009" name="Genome Res.">
        <title>Complete genome of the cellulolytic thermophile Acidothermus cellulolyticus 11B provides insights into its ecophysiological and evolutionary adaptations.</title>
        <authorList>
            <person name="Barabote R.D."/>
            <person name="Xie G."/>
            <person name="Leu D.H."/>
            <person name="Normand P."/>
            <person name="Necsulea A."/>
            <person name="Daubin V."/>
            <person name="Medigue C."/>
            <person name="Adney W.S."/>
            <person name="Xu X.C."/>
            <person name="Lapidus A."/>
            <person name="Parales R.E."/>
            <person name="Detter C."/>
            <person name="Pujic P."/>
            <person name="Bruce D."/>
            <person name="Lavire C."/>
            <person name="Challacombe J.F."/>
            <person name="Brettin T.S."/>
            <person name="Berry A.M."/>
        </authorList>
    </citation>
    <scope>NUCLEOTIDE SEQUENCE [LARGE SCALE GENOMIC DNA]</scope>
    <source>
        <strain>ATCC 43068 / DSM 8971 / 11B</strain>
    </source>
</reference>
<keyword id="KW-0066">ATP synthesis</keyword>
<keyword id="KW-1003">Cell membrane</keyword>
<keyword id="KW-0139">CF(1)</keyword>
<keyword id="KW-0375">Hydrogen ion transport</keyword>
<keyword id="KW-0406">Ion transport</keyword>
<keyword id="KW-0472">Membrane</keyword>
<keyword id="KW-1185">Reference proteome</keyword>
<keyword id="KW-0813">Transport</keyword>
<sequence length="274" mass="30252">MQGASRESLAAAWREAEELLVRPRPGAQPPEEVGTQLFSVTAILDEHPALRRALSDPAVEPGRKVSLADRLFGERIGETARRLVATVVRARWSRVRDLSDALETLGVLALLVAAERSRAVDDVEDELFRFGRIVASRPELRDALANRTLPVENKVRLVERLLADRAHPVTVALVTQLVRHPRGRTPEEGFADFSGIAARFRQRLVARVTTAVALTDDERSRLRRALSELYGRDVHLHVEVDPRIGGGVVVQLGDEVIDGSIASILAETRQRLAS</sequence>